<keyword id="KW-0539">Nucleus</keyword>
<keyword id="KW-1185">Reference proteome</keyword>
<feature type="chain" id="PRO_0000438877" description="Midnolin homolog">
    <location>
        <begin position="1"/>
        <end position="1122"/>
    </location>
</feature>
<feature type="domain" description="Ubiquitin-like" evidence="1">
    <location>
        <begin position="69"/>
        <end position="143"/>
    </location>
</feature>
<feature type="region of interest" description="Required for interaction with Pc" evidence="3">
    <location>
        <begin position="210"/>
        <end position="300"/>
    </location>
</feature>
<feature type="region of interest" description="Disordered" evidence="2">
    <location>
        <begin position="257"/>
        <end position="399"/>
    </location>
</feature>
<feature type="region of interest" description="Disordered" evidence="2">
    <location>
        <begin position="596"/>
        <end position="630"/>
    </location>
</feature>
<feature type="region of interest" description="Disordered" evidence="2">
    <location>
        <begin position="645"/>
        <end position="677"/>
    </location>
</feature>
<feature type="region of interest" description="Disordered" evidence="2">
    <location>
        <begin position="746"/>
        <end position="775"/>
    </location>
</feature>
<feature type="region of interest" description="Disordered" evidence="2">
    <location>
        <begin position="840"/>
        <end position="876"/>
    </location>
</feature>
<feature type="region of interest" description="Disordered" evidence="2">
    <location>
        <begin position="886"/>
        <end position="905"/>
    </location>
</feature>
<feature type="region of interest" description="Disordered" evidence="2">
    <location>
        <begin position="922"/>
        <end position="955"/>
    </location>
</feature>
<feature type="region of interest" description="Disordered" evidence="2">
    <location>
        <begin position="1067"/>
        <end position="1122"/>
    </location>
</feature>
<feature type="compositionally biased region" description="Low complexity" evidence="2">
    <location>
        <begin position="266"/>
        <end position="298"/>
    </location>
</feature>
<feature type="compositionally biased region" description="Basic residues" evidence="2">
    <location>
        <begin position="300"/>
        <end position="310"/>
    </location>
</feature>
<feature type="compositionally biased region" description="Basic residues" evidence="2">
    <location>
        <begin position="321"/>
        <end position="352"/>
    </location>
</feature>
<feature type="compositionally biased region" description="Low complexity" evidence="2">
    <location>
        <begin position="375"/>
        <end position="397"/>
    </location>
</feature>
<feature type="compositionally biased region" description="Basic residues" evidence="2">
    <location>
        <begin position="596"/>
        <end position="610"/>
    </location>
</feature>
<feature type="compositionally biased region" description="Low complexity" evidence="2">
    <location>
        <begin position="612"/>
        <end position="627"/>
    </location>
</feature>
<feature type="compositionally biased region" description="Low complexity" evidence="2">
    <location>
        <begin position="648"/>
        <end position="663"/>
    </location>
</feature>
<feature type="compositionally biased region" description="Low complexity" evidence="2">
    <location>
        <begin position="746"/>
        <end position="766"/>
    </location>
</feature>
<feature type="compositionally biased region" description="Low complexity" evidence="2">
    <location>
        <begin position="856"/>
        <end position="867"/>
    </location>
</feature>
<feature type="compositionally biased region" description="Low complexity" evidence="2">
    <location>
        <begin position="889"/>
        <end position="903"/>
    </location>
</feature>
<feature type="compositionally biased region" description="Low complexity" evidence="2">
    <location>
        <begin position="922"/>
        <end position="936"/>
    </location>
</feature>
<feature type="compositionally biased region" description="Polar residues" evidence="2">
    <location>
        <begin position="937"/>
        <end position="954"/>
    </location>
</feature>
<feature type="compositionally biased region" description="Polar residues" evidence="2">
    <location>
        <begin position="1071"/>
        <end position="1085"/>
    </location>
</feature>
<feature type="compositionally biased region" description="Low complexity" evidence="2">
    <location>
        <begin position="1086"/>
        <end position="1107"/>
    </location>
</feature>
<gene>
    <name evidence="7" type="primary">stx</name>
    <name evidence="7" type="ORF">CG32676</name>
</gene>
<reference evidence="8" key="1">
    <citation type="journal article" date="2000" name="Science">
        <title>The genome sequence of Drosophila melanogaster.</title>
        <authorList>
            <person name="Adams M.D."/>
            <person name="Celniker S.E."/>
            <person name="Holt R.A."/>
            <person name="Evans C.A."/>
            <person name="Gocayne J.D."/>
            <person name="Amanatides P.G."/>
            <person name="Scherer S.E."/>
            <person name="Li P.W."/>
            <person name="Hoskins R.A."/>
            <person name="Galle R.F."/>
            <person name="George R.A."/>
            <person name="Lewis S.E."/>
            <person name="Richards S."/>
            <person name="Ashburner M."/>
            <person name="Henderson S.N."/>
            <person name="Sutton G.G."/>
            <person name="Wortman J.R."/>
            <person name="Yandell M.D."/>
            <person name="Zhang Q."/>
            <person name="Chen L.X."/>
            <person name="Brandon R.C."/>
            <person name="Rogers Y.-H.C."/>
            <person name="Blazej R.G."/>
            <person name="Champe M."/>
            <person name="Pfeiffer B.D."/>
            <person name="Wan K.H."/>
            <person name="Doyle C."/>
            <person name="Baxter E.G."/>
            <person name="Helt G."/>
            <person name="Nelson C.R."/>
            <person name="Miklos G.L.G."/>
            <person name="Abril J.F."/>
            <person name="Agbayani A."/>
            <person name="An H.-J."/>
            <person name="Andrews-Pfannkoch C."/>
            <person name="Baldwin D."/>
            <person name="Ballew R.M."/>
            <person name="Basu A."/>
            <person name="Baxendale J."/>
            <person name="Bayraktaroglu L."/>
            <person name="Beasley E.M."/>
            <person name="Beeson K.Y."/>
            <person name="Benos P.V."/>
            <person name="Berman B.P."/>
            <person name="Bhandari D."/>
            <person name="Bolshakov S."/>
            <person name="Borkova D."/>
            <person name="Botchan M.R."/>
            <person name="Bouck J."/>
            <person name="Brokstein P."/>
            <person name="Brottier P."/>
            <person name="Burtis K.C."/>
            <person name="Busam D.A."/>
            <person name="Butler H."/>
            <person name="Cadieu E."/>
            <person name="Center A."/>
            <person name="Chandra I."/>
            <person name="Cherry J.M."/>
            <person name="Cawley S."/>
            <person name="Dahlke C."/>
            <person name="Davenport L.B."/>
            <person name="Davies P."/>
            <person name="de Pablos B."/>
            <person name="Delcher A."/>
            <person name="Deng Z."/>
            <person name="Mays A.D."/>
            <person name="Dew I."/>
            <person name="Dietz S.M."/>
            <person name="Dodson K."/>
            <person name="Doup L.E."/>
            <person name="Downes M."/>
            <person name="Dugan-Rocha S."/>
            <person name="Dunkov B.C."/>
            <person name="Dunn P."/>
            <person name="Durbin K.J."/>
            <person name="Evangelista C.C."/>
            <person name="Ferraz C."/>
            <person name="Ferriera S."/>
            <person name="Fleischmann W."/>
            <person name="Fosler C."/>
            <person name="Gabrielian A.E."/>
            <person name="Garg N.S."/>
            <person name="Gelbart W.M."/>
            <person name="Glasser K."/>
            <person name="Glodek A."/>
            <person name="Gong F."/>
            <person name="Gorrell J.H."/>
            <person name="Gu Z."/>
            <person name="Guan P."/>
            <person name="Harris M."/>
            <person name="Harris N.L."/>
            <person name="Harvey D.A."/>
            <person name="Heiman T.J."/>
            <person name="Hernandez J.R."/>
            <person name="Houck J."/>
            <person name="Hostin D."/>
            <person name="Houston K.A."/>
            <person name="Howland T.J."/>
            <person name="Wei M.-H."/>
            <person name="Ibegwam C."/>
            <person name="Jalali M."/>
            <person name="Kalush F."/>
            <person name="Karpen G.H."/>
            <person name="Ke Z."/>
            <person name="Kennison J.A."/>
            <person name="Ketchum K.A."/>
            <person name="Kimmel B.E."/>
            <person name="Kodira C.D."/>
            <person name="Kraft C.L."/>
            <person name="Kravitz S."/>
            <person name="Kulp D."/>
            <person name="Lai Z."/>
            <person name="Lasko P."/>
            <person name="Lei Y."/>
            <person name="Levitsky A.A."/>
            <person name="Li J.H."/>
            <person name="Li Z."/>
            <person name="Liang Y."/>
            <person name="Lin X."/>
            <person name="Liu X."/>
            <person name="Mattei B."/>
            <person name="McIntosh T.C."/>
            <person name="McLeod M.P."/>
            <person name="McPherson D."/>
            <person name="Merkulov G."/>
            <person name="Milshina N.V."/>
            <person name="Mobarry C."/>
            <person name="Morris J."/>
            <person name="Moshrefi A."/>
            <person name="Mount S.M."/>
            <person name="Moy M."/>
            <person name="Murphy B."/>
            <person name="Murphy L."/>
            <person name="Muzny D.M."/>
            <person name="Nelson D.L."/>
            <person name="Nelson D.R."/>
            <person name="Nelson K.A."/>
            <person name="Nixon K."/>
            <person name="Nusskern D.R."/>
            <person name="Pacleb J.M."/>
            <person name="Palazzolo M."/>
            <person name="Pittman G.S."/>
            <person name="Pan S."/>
            <person name="Pollard J."/>
            <person name="Puri V."/>
            <person name="Reese M.G."/>
            <person name="Reinert K."/>
            <person name="Remington K."/>
            <person name="Saunders R.D.C."/>
            <person name="Scheeler F."/>
            <person name="Shen H."/>
            <person name="Shue B.C."/>
            <person name="Siden-Kiamos I."/>
            <person name="Simpson M."/>
            <person name="Skupski M.P."/>
            <person name="Smith T.J."/>
            <person name="Spier E."/>
            <person name="Spradling A.C."/>
            <person name="Stapleton M."/>
            <person name="Strong R."/>
            <person name="Sun E."/>
            <person name="Svirskas R."/>
            <person name="Tector C."/>
            <person name="Turner R."/>
            <person name="Venter E."/>
            <person name="Wang A.H."/>
            <person name="Wang X."/>
            <person name="Wang Z.-Y."/>
            <person name="Wassarman D.A."/>
            <person name="Weinstock G.M."/>
            <person name="Weissenbach J."/>
            <person name="Williams S.M."/>
            <person name="Woodage T."/>
            <person name="Worley K.C."/>
            <person name="Wu D."/>
            <person name="Yang S."/>
            <person name="Yao Q.A."/>
            <person name="Ye J."/>
            <person name="Yeh R.-F."/>
            <person name="Zaveri J.S."/>
            <person name="Zhan M."/>
            <person name="Zhang G."/>
            <person name="Zhao Q."/>
            <person name="Zheng L."/>
            <person name="Zheng X.H."/>
            <person name="Zhong F.N."/>
            <person name="Zhong W."/>
            <person name="Zhou X."/>
            <person name="Zhu S.C."/>
            <person name="Zhu X."/>
            <person name="Smith H.O."/>
            <person name="Gibbs R.A."/>
            <person name="Myers E.W."/>
            <person name="Rubin G.M."/>
            <person name="Venter J.C."/>
        </authorList>
    </citation>
    <scope>NUCLEOTIDE SEQUENCE [LARGE SCALE GENOMIC DNA]</scope>
    <source>
        <strain evidence="8">Berkeley</strain>
    </source>
</reference>
<reference evidence="8" key="2">
    <citation type="journal article" date="2002" name="Genome Biol.">
        <title>Annotation of the Drosophila melanogaster euchromatic genome: a systematic review.</title>
        <authorList>
            <person name="Misra S."/>
            <person name="Crosby M.A."/>
            <person name="Mungall C.J."/>
            <person name="Matthews B.B."/>
            <person name="Campbell K.S."/>
            <person name="Hradecky P."/>
            <person name="Huang Y."/>
            <person name="Kaminker J.S."/>
            <person name="Millburn G.H."/>
            <person name="Prochnik S.E."/>
            <person name="Smith C.D."/>
            <person name="Tupy J.L."/>
            <person name="Whitfield E.J."/>
            <person name="Bayraktaroglu L."/>
            <person name="Berman B.P."/>
            <person name="Bettencourt B.R."/>
            <person name="Celniker S.E."/>
            <person name="de Grey A.D.N.J."/>
            <person name="Drysdale R.A."/>
            <person name="Harris N.L."/>
            <person name="Richter J."/>
            <person name="Russo S."/>
            <person name="Schroeder A.J."/>
            <person name="Shu S.Q."/>
            <person name="Stapleton M."/>
            <person name="Yamada C."/>
            <person name="Ashburner M."/>
            <person name="Gelbart W.M."/>
            <person name="Rubin G.M."/>
            <person name="Lewis S.E."/>
        </authorList>
    </citation>
    <scope>GENOME REANNOTATION</scope>
    <source>
        <strain evidence="8">Berkeley</strain>
    </source>
</reference>
<reference evidence="6" key="3">
    <citation type="journal article" date="2002" name="Genome Biol.">
        <title>A Drosophila full-length cDNA resource.</title>
        <authorList>
            <person name="Stapleton M."/>
            <person name="Carlson J.W."/>
            <person name="Brokstein P."/>
            <person name="Yu C."/>
            <person name="Champe M."/>
            <person name="George R.A."/>
            <person name="Guarin H."/>
            <person name="Kronmiller B."/>
            <person name="Pacleb J.M."/>
            <person name="Park S."/>
            <person name="Wan K.H."/>
            <person name="Rubin G.M."/>
            <person name="Celniker S.E."/>
        </authorList>
    </citation>
    <scope>NUCLEOTIDE SEQUENCE [LARGE SCALE MRNA]</scope>
    <source>
        <strain evidence="6">Berkeley</strain>
        <tissue evidence="6">Head</tissue>
    </source>
</reference>
<reference evidence="5" key="4">
    <citation type="journal article" date="2016" name="Dev. Cell">
        <title>Stuxnet facilitates the degradation of polycomb protein during development.</title>
        <authorList>
            <person name="Du J."/>
            <person name="Zhang J."/>
            <person name="He T."/>
            <person name="Li Y."/>
            <person name="Su Y."/>
            <person name="Tie F."/>
            <person name="Liu M."/>
            <person name="Harte P.J."/>
            <person name="Zhu A.J."/>
        </authorList>
    </citation>
    <scope>FUNCTION</scope>
    <scope>INTERACTION WITH PC AND RPN10</scope>
    <scope>SUBCELLULAR LOCATION</scope>
    <scope>DOMAIN</scope>
    <scope>DISRUPTION PHENOTYPE</scope>
</reference>
<organism evidence="6">
    <name type="scientific">Drosophila melanogaster</name>
    <name type="common">Fruit fly</name>
    <dbReference type="NCBI Taxonomy" id="7227"/>
    <lineage>
        <taxon>Eukaryota</taxon>
        <taxon>Metazoa</taxon>
        <taxon>Ecdysozoa</taxon>
        <taxon>Arthropoda</taxon>
        <taxon>Hexapoda</taxon>
        <taxon>Insecta</taxon>
        <taxon>Pterygota</taxon>
        <taxon>Neoptera</taxon>
        <taxon>Endopterygota</taxon>
        <taxon>Diptera</taxon>
        <taxon>Brachycera</taxon>
        <taxon>Muscomorpha</taxon>
        <taxon>Ephydroidea</taxon>
        <taxon>Drosophilidae</taxon>
        <taxon>Drosophila</taxon>
        <taxon>Sophophora</taxon>
    </lineage>
</organism>
<name>MIDN_DROME</name>
<evidence type="ECO:0000255" key="1">
    <source>
        <dbReference type="PROSITE-ProRule" id="PRU00214"/>
    </source>
</evidence>
<evidence type="ECO:0000256" key="2">
    <source>
        <dbReference type="SAM" id="MobiDB-lite"/>
    </source>
</evidence>
<evidence type="ECO:0000269" key="3">
    <source>
    </source>
</evidence>
<evidence type="ECO:0000303" key="4">
    <source>
    </source>
</evidence>
<evidence type="ECO:0000305" key="5"/>
<evidence type="ECO:0000312" key="6">
    <source>
        <dbReference type="EMBL" id="AAM11022.1"/>
    </source>
</evidence>
<evidence type="ECO:0000312" key="7">
    <source>
        <dbReference type="FlyBase" id="FBgn0052676"/>
    </source>
</evidence>
<evidence type="ECO:0000312" key="8">
    <source>
        <dbReference type="Proteomes" id="UP000000803"/>
    </source>
</evidence>
<accession>Q8SXD4</accession>
<accession>Q9W2R7</accession>
<protein>
    <recommendedName>
        <fullName evidence="5">Midnolin homolog</fullName>
    </recommendedName>
    <alternativeName>
        <fullName evidence="4">Protein stuxnet</fullName>
    </alternativeName>
</protein>
<proteinExistence type="evidence at protein level"/>
<sequence length="1122" mass="112184">MDKSAATNSATADGQNEAAAAAAAAATAAGCGSNNSSSTSSSNNTANSNNALQRLATTTSAVVASPMTINLNISTTTGGNFGVSVEPHISVESLKKIIAKKLKVAKDRICLLHREKELQDGTLRDHNLMDGSKIILIPNVETGLLAQRPENTVMQALESLNDAQVNDFLSGKTPLNLSMRLGDHMMLIQLQLSTVNPAGGGAATVAPVAGGASGSSINAAASTTSTVPVMPAGTGCSGANSTSLSSSAVLAAAAAGVGGSTGTSGSGTSSSSSSTSSSSSSSSSSSRTRSSGQRSSGRIGHGHVHSHQHPSLHAANWHGFSHGHGHGHSHGNGHGHHHHHHHHHHHHHHHHNASAVAAGSGGGMSSLRKMYGDLPSSSGASGSAPATGTGQSQSSSTLNGPDLTKLLIKGGIQNIVNSFALKDAGANARPVANGGSGSSPGKPVLEQSPIKSLSNLVSSPIKMTTIKNIPLPTTAATSSSSSCNCSSAAPSSSSSTSSGACATGGCQQDPIAAKLTSCLCTRLPTPSVAPPVATLVAPAPVARSGSTSSPSKCPESSCSGANAGFAARSTLAGTRVTFSGNSMLHKTGNNRITRTKHRHYHGQGHGHGHGNGHSSSSSSSSSSSSSHFFNHACAGNQPSVNAAAFATSSSSSSSSPSSSSSSPSKRRKLEQGMGAGAVGATAATATAAATVALPASTSATTAEPDDSLLGVSDTRTLAEASRNLTQTLRKLSKEVFTNKIDLSGAGVVSSGRSSSSGATSSGAASGEEAPRKSGSGAVIESMKNHGKGIYSGTFSGTLNPALQDRFGRPKRDISTVIHILNDLLSATPQYGRGARISFEAPTTGSVSGSGSGSGSSGSSSTTSSGSGLHHGSRSKMYSSKHHNCAKCNSRAQQQQQQSATLASGSGGSCSFRDCPSYHSSSAATKASTSSKSSSHSCCQTAEAPSSMTSQSNGCTCRYRRDDGQGEREREHTCQKCTVELANMKTRSKMDQLRLVMQQHKQKREARKLKSGPYATAASASAADSLSSIAAGGTAAVPMGAAAQYSAVSALVATPLQPAAVPVQTGKAAPANSITGNSSNANVNGNTSTAPATAATSAAAAPTAAPPSEVSPNHIVEEVDTAA</sequence>
<dbReference type="EMBL" id="AE014298">
    <property type="protein sequence ID" value="AAF46623.2"/>
    <property type="molecule type" value="Genomic_DNA"/>
</dbReference>
<dbReference type="EMBL" id="AE014298">
    <property type="protein sequence ID" value="AGB95269.1"/>
    <property type="molecule type" value="Genomic_DNA"/>
</dbReference>
<dbReference type="EMBL" id="AY094669">
    <property type="protein sequence ID" value="AAM11022.1"/>
    <property type="molecule type" value="mRNA"/>
</dbReference>
<dbReference type="RefSeq" id="NP_001259426.1">
    <property type="nucleotide sequence ID" value="NM_001272497.2"/>
</dbReference>
<dbReference type="RefSeq" id="NP_572648.1">
    <property type="nucleotide sequence ID" value="NM_132420.4"/>
</dbReference>
<dbReference type="SMR" id="Q8SXD4"/>
<dbReference type="FunCoup" id="Q8SXD4">
    <property type="interactions" value="759"/>
</dbReference>
<dbReference type="IntAct" id="Q8SXD4">
    <property type="interactions" value="2"/>
</dbReference>
<dbReference type="STRING" id="7227.FBpp0305231"/>
<dbReference type="GlyGen" id="Q8SXD4">
    <property type="glycosylation" value="1 site"/>
</dbReference>
<dbReference type="PaxDb" id="7227-FBpp0305231"/>
<dbReference type="DNASU" id="32005"/>
<dbReference type="EnsemblMetazoa" id="FBtr0071503">
    <property type="protein sequence ID" value="FBpp0071432"/>
    <property type="gene ID" value="FBgn0052676"/>
</dbReference>
<dbReference type="EnsemblMetazoa" id="FBtr0333017">
    <property type="protein sequence ID" value="FBpp0305231"/>
    <property type="gene ID" value="FBgn0052676"/>
</dbReference>
<dbReference type="GeneID" id="32005"/>
<dbReference type="KEGG" id="dme:Dmel_CG32676"/>
<dbReference type="UCSC" id="CG32676-RA">
    <property type="organism name" value="d. melanogaster"/>
</dbReference>
<dbReference type="AGR" id="FB:FBgn0052676"/>
<dbReference type="CTD" id="32005"/>
<dbReference type="FlyBase" id="FBgn0052676">
    <property type="gene designation" value="stx"/>
</dbReference>
<dbReference type="VEuPathDB" id="VectorBase:FBgn0052676"/>
<dbReference type="eggNOG" id="ENOG502QTDX">
    <property type="taxonomic scope" value="Eukaryota"/>
</dbReference>
<dbReference type="GeneTree" id="ENSGT00510000049027"/>
<dbReference type="HOGENOM" id="CLU_280229_0_0_1"/>
<dbReference type="InParanoid" id="Q8SXD4"/>
<dbReference type="OMA" id="GMHHGSR"/>
<dbReference type="OrthoDB" id="1916003at2759"/>
<dbReference type="PhylomeDB" id="Q8SXD4"/>
<dbReference type="SignaLink" id="Q8SXD4"/>
<dbReference type="BioGRID-ORCS" id="32005">
    <property type="hits" value="0 hits in 1 CRISPR screen"/>
</dbReference>
<dbReference type="ChiTaRS" id="CG32676">
    <property type="organism name" value="fly"/>
</dbReference>
<dbReference type="GenomeRNAi" id="32005"/>
<dbReference type="PRO" id="PR:Q8SXD4"/>
<dbReference type="Proteomes" id="UP000000803">
    <property type="component" value="Chromosome X"/>
</dbReference>
<dbReference type="Bgee" id="FBgn0052676">
    <property type="expression patterns" value="Expressed in adult Malpighian tubule stellate cell of main segment in Malpighian tubule and 271 other cell types or tissues"/>
</dbReference>
<dbReference type="ExpressionAtlas" id="Q8SXD4">
    <property type="expression patterns" value="baseline and differential"/>
</dbReference>
<dbReference type="GO" id="GO:0005654">
    <property type="term" value="C:nucleoplasm"/>
    <property type="evidence" value="ECO:0007005"/>
    <property type="project" value="FlyBase"/>
</dbReference>
<dbReference type="GO" id="GO:0005634">
    <property type="term" value="C:nucleus"/>
    <property type="evidence" value="ECO:0000314"/>
    <property type="project" value="FlyBase"/>
</dbReference>
<dbReference type="GO" id="GO:0010499">
    <property type="term" value="P:proteasomal ubiquitin-independent protein catabolic process"/>
    <property type="evidence" value="ECO:0000315"/>
    <property type="project" value="FlyBase"/>
</dbReference>
<dbReference type="CDD" id="cd01804">
    <property type="entry name" value="Ubl_midnolin"/>
    <property type="match status" value="1"/>
</dbReference>
<dbReference type="FunFam" id="3.10.20.90:FF:000475">
    <property type="entry name" value="Midnolin homolog"/>
    <property type="match status" value="1"/>
</dbReference>
<dbReference type="Gene3D" id="3.10.20.90">
    <property type="entry name" value="Phosphatidylinositol 3-kinase Catalytic Subunit, Chain A, domain 1"/>
    <property type="match status" value="1"/>
</dbReference>
<dbReference type="InterPro" id="IPR039336">
    <property type="entry name" value="Midnolin"/>
</dbReference>
<dbReference type="InterPro" id="IPR000626">
    <property type="entry name" value="Ubiquitin-like_dom"/>
</dbReference>
<dbReference type="InterPro" id="IPR029071">
    <property type="entry name" value="Ubiquitin-like_domsf"/>
</dbReference>
<dbReference type="PANTHER" id="PTHR23010">
    <property type="entry name" value="MIDNOLIN"/>
    <property type="match status" value="1"/>
</dbReference>
<dbReference type="PANTHER" id="PTHR23010:SF1">
    <property type="entry name" value="MIDNOLIN"/>
    <property type="match status" value="1"/>
</dbReference>
<dbReference type="Pfam" id="PF00240">
    <property type="entry name" value="ubiquitin"/>
    <property type="match status" value="1"/>
</dbReference>
<dbReference type="SMART" id="SM00213">
    <property type="entry name" value="UBQ"/>
    <property type="match status" value="1"/>
</dbReference>
<dbReference type="SUPFAM" id="SSF54236">
    <property type="entry name" value="Ubiquitin-like"/>
    <property type="match status" value="1"/>
</dbReference>
<dbReference type="PROSITE" id="PS50053">
    <property type="entry name" value="UBIQUITIN_2"/>
    <property type="match status" value="1"/>
</dbReference>
<comment type="function">
    <text evidence="3">Facilitates ubiquitin-independent proteasomal degradation of polycomb protein Pc by interacting directly with the proteasome and recruiting Pc to it.</text>
</comment>
<comment type="subunit">
    <text evidence="3">Interacts with PRC1 complex member polycomb protein Pc; the interaction targets Pc for ubiquitin-independent proteasomal degradation. Does not interact with PRC1 members Ph, Psc or Sce so does not appear to be a member of the PRC1 complex. Interacts with 26S proteasome regulatory subunit Rpn10.</text>
</comment>
<comment type="subcellular location">
    <subcellularLocation>
        <location evidence="3">Nucleus</location>
    </subcellularLocation>
</comment>
<comment type="domain">
    <text evidence="3">The ubiquitin-like domain is required for Pc degradation.</text>
</comment>
<comment type="disruption phenotype">
    <text evidence="3">Homozygous and hemizygous lethal at the pupal stage. Hemizygous escapers display haltere-to-wing and metathoracic-to-mesothoracic leg transformations and die as pharate adults.</text>
</comment>
<comment type="miscellaneous">
    <text evidence="4">The name 'stuxnet' derives from a computer (PC) virus of the same name, due to the role of the protein in promoting Pc protein degradation in the proteasome.</text>
</comment>